<protein>
    <recommendedName>
        <fullName>Probable biofilm formation methyltransferase WspC</fullName>
        <ecNumber>2.1.1.-</ecNumber>
    </recommendedName>
</protein>
<proteinExistence type="inferred from homology"/>
<accession>Q9HXT5</accession>
<dbReference type="EC" id="2.1.1.-"/>
<dbReference type="EMBL" id="AE004091">
    <property type="protein sequence ID" value="AAG07093.1"/>
    <property type="molecule type" value="Genomic_DNA"/>
</dbReference>
<dbReference type="PIR" id="A83184">
    <property type="entry name" value="A83184"/>
</dbReference>
<dbReference type="RefSeq" id="NP_252395.1">
    <property type="nucleotide sequence ID" value="NC_002516.2"/>
</dbReference>
<dbReference type="RefSeq" id="WP_003113845.1">
    <property type="nucleotide sequence ID" value="NZ_QZGE01000001.1"/>
</dbReference>
<dbReference type="SMR" id="Q9HXT5"/>
<dbReference type="STRING" id="208964.PA3706"/>
<dbReference type="PaxDb" id="208964-PA3706"/>
<dbReference type="GeneID" id="878238"/>
<dbReference type="KEGG" id="pae:PA3706"/>
<dbReference type="PATRIC" id="fig|208964.12.peg.3877"/>
<dbReference type="PseudoCAP" id="PA3706"/>
<dbReference type="HOGENOM" id="CLU_025854_4_0_6"/>
<dbReference type="InParanoid" id="Q9HXT5"/>
<dbReference type="OrthoDB" id="9816309at2"/>
<dbReference type="PhylomeDB" id="Q9HXT5"/>
<dbReference type="BioCyc" id="PAER208964:G1FZ6-3776-MONOMER"/>
<dbReference type="Proteomes" id="UP000002438">
    <property type="component" value="Chromosome"/>
</dbReference>
<dbReference type="GO" id="GO:0098561">
    <property type="term" value="C:methyl accepting chemotaxis protein complex"/>
    <property type="evidence" value="ECO:0000318"/>
    <property type="project" value="GO_Central"/>
</dbReference>
<dbReference type="GO" id="GO:0008276">
    <property type="term" value="F:protein methyltransferase activity"/>
    <property type="evidence" value="ECO:0000318"/>
    <property type="project" value="GO_Central"/>
</dbReference>
<dbReference type="GO" id="GO:0008757">
    <property type="term" value="F:S-adenosylmethionine-dependent methyltransferase activity"/>
    <property type="evidence" value="ECO:0007669"/>
    <property type="project" value="InterPro"/>
</dbReference>
<dbReference type="GO" id="GO:0006935">
    <property type="term" value="P:chemotaxis"/>
    <property type="evidence" value="ECO:0000318"/>
    <property type="project" value="GO_Central"/>
</dbReference>
<dbReference type="GO" id="GO:0032259">
    <property type="term" value="P:methylation"/>
    <property type="evidence" value="ECO:0007669"/>
    <property type="project" value="UniProtKB-KW"/>
</dbReference>
<dbReference type="CDD" id="cd02440">
    <property type="entry name" value="AdoMet_MTases"/>
    <property type="match status" value="1"/>
</dbReference>
<dbReference type="Gene3D" id="1.25.40.10">
    <property type="entry name" value="Tetratricopeptide repeat domain"/>
    <property type="match status" value="1"/>
</dbReference>
<dbReference type="Gene3D" id="3.40.50.150">
    <property type="entry name" value="Vaccinia Virus protein VP39"/>
    <property type="match status" value="1"/>
</dbReference>
<dbReference type="InterPro" id="IPR050903">
    <property type="entry name" value="Bact_Chemotaxis_MeTrfase"/>
</dbReference>
<dbReference type="InterPro" id="IPR022642">
    <property type="entry name" value="CheR_C"/>
</dbReference>
<dbReference type="InterPro" id="IPR000780">
    <property type="entry name" value="CheR_MeTrfase"/>
</dbReference>
<dbReference type="InterPro" id="IPR029063">
    <property type="entry name" value="SAM-dependent_MTases_sf"/>
</dbReference>
<dbReference type="InterPro" id="IPR011990">
    <property type="entry name" value="TPR-like_helical_dom_sf"/>
</dbReference>
<dbReference type="InterPro" id="IPR019734">
    <property type="entry name" value="TPR_rpt"/>
</dbReference>
<dbReference type="PANTHER" id="PTHR24422">
    <property type="entry name" value="CHEMOTAXIS PROTEIN METHYLTRANSFERASE"/>
    <property type="match status" value="1"/>
</dbReference>
<dbReference type="PANTHER" id="PTHR24422:SF19">
    <property type="entry name" value="CHEMOTAXIS PROTEIN METHYLTRANSFERASE"/>
    <property type="match status" value="1"/>
</dbReference>
<dbReference type="Pfam" id="PF01739">
    <property type="entry name" value="CheR"/>
    <property type="match status" value="1"/>
</dbReference>
<dbReference type="PRINTS" id="PR00996">
    <property type="entry name" value="CHERMTFRASE"/>
</dbReference>
<dbReference type="SMART" id="SM00138">
    <property type="entry name" value="MeTrc"/>
    <property type="match status" value="1"/>
</dbReference>
<dbReference type="SUPFAM" id="SSF53335">
    <property type="entry name" value="S-adenosyl-L-methionine-dependent methyltransferases"/>
    <property type="match status" value="1"/>
</dbReference>
<dbReference type="SUPFAM" id="SSF48452">
    <property type="entry name" value="TPR-like"/>
    <property type="match status" value="1"/>
</dbReference>
<dbReference type="PROSITE" id="PS50123">
    <property type="entry name" value="CHER"/>
    <property type="match status" value="1"/>
</dbReference>
<dbReference type="PROSITE" id="PS50005">
    <property type="entry name" value="TPR"/>
    <property type="match status" value="1"/>
</dbReference>
<dbReference type="PROSITE" id="PS50293">
    <property type="entry name" value="TPR_REGION"/>
    <property type="match status" value="1"/>
</dbReference>
<sequence>MNDRFERLLKSRIGLDASSVGSAVIERAVRQRMSGLALHDEDEYWMRLNGSPGEVQALIEAVVVPETWFFRYPESFTTLARLAFERLPSLGGGRALRILSLPCSTGEEPYSIVMALLDAGLSEYLFEVDALDVSARVIERASLGVYGRNSFRGDELGFRDRHFSEVAEGYQLAEQVRRKVRFRCGNLLDPGLLAGEAPYDFVFCRNLLIYFDRPTQSEVVEVLKRLLRPDGAMFIGPAEASLLSQHGMQPIGVPLSFVFRRTSEAPRGARPKAVSDGARPVVAAAVERASIRPSPPPPAKPRQRLSSLVPPASGQPLASPVGEFDEIARLADAGQHREARAACERQLAARGPSATVFYWLGLLSDVAGQEQEAQDFYRKALYLEPQHAEALAHLAALLAARGDHAGARRLQQRAARGVNKDG</sequence>
<feature type="chain" id="PRO_0000424791" description="Probable biofilm formation methyltransferase WspC">
    <location>
        <begin position="1"/>
        <end position="422"/>
    </location>
</feature>
<feature type="domain" description="CheR-type methyltransferase" evidence="2">
    <location>
        <begin position="1"/>
        <end position="264"/>
    </location>
</feature>
<feature type="repeat" description="TPR">
    <location>
        <begin position="354"/>
        <end position="387"/>
    </location>
</feature>
<feature type="region of interest" description="Disordered" evidence="3">
    <location>
        <begin position="289"/>
        <end position="316"/>
    </location>
</feature>
<feature type="binding site" evidence="1">
    <location>
        <position position="67"/>
    </location>
    <ligand>
        <name>S-adenosyl-L-methionine</name>
        <dbReference type="ChEBI" id="CHEBI:59789"/>
    </ligand>
</feature>
<feature type="binding site" evidence="1">
    <location>
        <position position="71"/>
    </location>
    <ligand>
        <name>S-adenosyl-L-methionine</name>
        <dbReference type="ChEBI" id="CHEBI:59789"/>
    </ligand>
</feature>
<feature type="binding site" evidence="1">
    <location>
        <position position="108"/>
    </location>
    <ligand>
        <name>S-adenosyl-L-methionine</name>
        <dbReference type="ChEBI" id="CHEBI:59789"/>
    </ligand>
</feature>
<feature type="binding site" evidence="1">
    <location>
        <position position="132"/>
    </location>
    <ligand>
        <name>S-adenosyl-L-methionine</name>
        <dbReference type="ChEBI" id="CHEBI:59789"/>
    </ligand>
</feature>
<feature type="binding site" evidence="1">
    <location>
        <begin position="186"/>
        <end position="187"/>
    </location>
    <ligand>
        <name>S-adenosyl-L-methionine</name>
        <dbReference type="ChEBI" id="CHEBI:59789"/>
    </ligand>
</feature>
<feature type="binding site" evidence="1">
    <location>
        <begin position="205"/>
        <end position="206"/>
    </location>
    <ligand>
        <name>S-adenosyl-L-methionine</name>
        <dbReference type="ChEBI" id="CHEBI:59789"/>
    </ligand>
</feature>
<reference key="1">
    <citation type="journal article" date="2000" name="Nature">
        <title>Complete genome sequence of Pseudomonas aeruginosa PAO1, an opportunistic pathogen.</title>
        <authorList>
            <person name="Stover C.K."/>
            <person name="Pham X.-Q.T."/>
            <person name="Erwin A.L."/>
            <person name="Mizoguchi S.D."/>
            <person name="Warrener P."/>
            <person name="Hickey M.J."/>
            <person name="Brinkman F.S.L."/>
            <person name="Hufnagle W.O."/>
            <person name="Kowalik D.J."/>
            <person name="Lagrou M."/>
            <person name="Garber R.L."/>
            <person name="Goltry L."/>
            <person name="Tolentino E."/>
            <person name="Westbrock-Wadman S."/>
            <person name="Yuan Y."/>
            <person name="Brody L.L."/>
            <person name="Coulter S.N."/>
            <person name="Folger K.R."/>
            <person name="Kas A."/>
            <person name="Larbig K."/>
            <person name="Lim R.M."/>
            <person name="Smith K.A."/>
            <person name="Spencer D.H."/>
            <person name="Wong G.K.-S."/>
            <person name="Wu Z."/>
            <person name="Paulsen I.T."/>
            <person name="Reizer J."/>
            <person name="Saier M.H. Jr."/>
            <person name="Hancock R.E.W."/>
            <person name="Lory S."/>
            <person name="Olson M.V."/>
        </authorList>
    </citation>
    <scope>NUCLEOTIDE SEQUENCE [LARGE SCALE GENOMIC DNA]</scope>
    <source>
        <strain>ATCC 15692 / DSM 22644 / CIP 104116 / JCM 14847 / LMG 12228 / 1C / PRS 101 / PAO1</strain>
    </source>
</reference>
<reference key="2">
    <citation type="journal article" date="2005" name="Proc. Natl. Acad. Sci. U.S.A.">
        <title>A chemosensory system that regulates biofilm formation through modulation of cyclic diguanylate levels.</title>
        <authorList>
            <person name="Hickman J.W."/>
            <person name="Tifrea D.F."/>
            <person name="Harwood C.S."/>
        </authorList>
    </citation>
    <scope>FUNCTION</scope>
    <scope>GENE NAME</scope>
    <source>
        <strain>ATCC 15692 / DSM 22644 / CIP 104116 / JCM 14847 / LMG 12228 / 1C / PRS 101 / PAO1</strain>
    </source>
</reference>
<keyword id="KW-0489">Methyltransferase</keyword>
<keyword id="KW-1185">Reference proteome</keyword>
<keyword id="KW-0949">S-adenosyl-L-methionine</keyword>
<keyword id="KW-0802">TPR repeat</keyword>
<keyword id="KW-0808">Transferase</keyword>
<name>WSPC_PSEAE</name>
<gene>
    <name type="primary">wspC</name>
    <name type="ordered locus">PA3706</name>
</gene>
<comment type="function">
    <text evidence="4">Involved in biofilm formation.</text>
</comment>
<comment type="subunit">
    <text evidence="1">Monomer.</text>
</comment>
<organism>
    <name type="scientific">Pseudomonas aeruginosa (strain ATCC 15692 / DSM 22644 / CIP 104116 / JCM 14847 / LMG 12228 / 1C / PRS 101 / PAO1)</name>
    <dbReference type="NCBI Taxonomy" id="208964"/>
    <lineage>
        <taxon>Bacteria</taxon>
        <taxon>Pseudomonadati</taxon>
        <taxon>Pseudomonadota</taxon>
        <taxon>Gammaproteobacteria</taxon>
        <taxon>Pseudomonadales</taxon>
        <taxon>Pseudomonadaceae</taxon>
        <taxon>Pseudomonas</taxon>
    </lineage>
</organism>
<evidence type="ECO:0000250" key="1"/>
<evidence type="ECO:0000255" key="2">
    <source>
        <dbReference type="PROSITE-ProRule" id="PRU00051"/>
    </source>
</evidence>
<evidence type="ECO:0000256" key="3">
    <source>
        <dbReference type="SAM" id="MobiDB-lite"/>
    </source>
</evidence>
<evidence type="ECO:0000305" key="4">
    <source>
    </source>
</evidence>